<protein>
    <recommendedName>
        <fullName>D-serine/D-alanine/glycine transporter</fullName>
    </recommendedName>
</protein>
<comment type="function">
    <text evidence="1">Permease that is involved in the transport across the cytoplasmic membrane of D-alanine, D-serine and glycine.</text>
</comment>
<comment type="catalytic activity">
    <reaction evidence="1">
        <text>D-alanine(in) + H(+)(in) = D-alanine(out) + H(+)(out)</text>
        <dbReference type="Rhea" id="RHEA:28903"/>
        <dbReference type="ChEBI" id="CHEBI:15378"/>
        <dbReference type="ChEBI" id="CHEBI:57416"/>
    </reaction>
    <physiologicalReaction direction="right-to-left" evidence="1">
        <dbReference type="Rhea" id="RHEA:28905"/>
    </physiologicalReaction>
</comment>
<comment type="catalytic activity">
    <reaction evidence="1">
        <text>D-serine(out) + H(+)(out) = D-serine(in) + H(+)(in)</text>
        <dbReference type="Rhea" id="RHEA:70647"/>
        <dbReference type="ChEBI" id="CHEBI:15378"/>
        <dbReference type="ChEBI" id="CHEBI:35247"/>
    </reaction>
    <physiologicalReaction direction="left-to-right" evidence="1">
        <dbReference type="Rhea" id="RHEA:70648"/>
    </physiologicalReaction>
</comment>
<comment type="catalytic activity">
    <reaction evidence="1">
        <text>glycine(in) + H(+)(in) = glycine(out) + H(+)(out)</text>
        <dbReference type="Rhea" id="RHEA:28899"/>
        <dbReference type="ChEBI" id="CHEBI:15378"/>
        <dbReference type="ChEBI" id="CHEBI:57305"/>
    </reaction>
    <physiologicalReaction direction="right-to-left" evidence="1">
        <dbReference type="Rhea" id="RHEA:28901"/>
    </physiologicalReaction>
</comment>
<comment type="subcellular location">
    <subcellularLocation>
        <location evidence="2">Cell inner membrane</location>
        <topology evidence="3">Multi-pass membrane protein</topology>
    </subcellularLocation>
</comment>
<comment type="similarity">
    <text evidence="4">Belongs to the amino acid-polyamine-organocation (APC) superfamily. Amino acid transporter (AAT) (TC 2.A.3.1) family.</text>
</comment>
<name>CYCA_ECO57</name>
<sequence length="470" mass="51660">MVDQVKVVADDQAPAEQSLRRNLTNRHIQLIAIGGAIGTGLFMGSGKTISLAGPSIIFVYMIIGFMLFFVMRAMGELLLSNLEYKSFSDFASDLLGPWAGYFTGWTYWFCWVVTGMADVVAITAYAQFWFPDLSDWVASLAVIVLLLTLNLATVKMFGEMEFWFAMIKIVAIVSLIVVGLVMVAMHFQSPTGVEASFAHLWNDGGWFPKGLSGFFAGFQIAVFAFVGIELVGTTAAETKDPEKSLPRAINSIPIRIIMFYVFALIVIMSVTPWSSVVPEKSPFVELFVLVGLPAAASVINFVVLTSAASSANSGVFSTSRMLFGLAQEGVAPKAFAKLSKRAVPAKGLTFSCICLLGGVVMLYVNPSVIGAFTMITTVSAILFMFVWTIILCSYLVYRKQRPHLHEKSIYKMPLGKLMCWVCMAFFVFVVVLLTLEDDTRQALLVTPLWFIALGLGWLFIGKKRAAELRK</sequence>
<reference key="1">
    <citation type="journal article" date="2001" name="Nature">
        <title>Genome sequence of enterohaemorrhagic Escherichia coli O157:H7.</title>
        <authorList>
            <person name="Perna N.T."/>
            <person name="Plunkett G. III"/>
            <person name="Burland V."/>
            <person name="Mau B."/>
            <person name="Glasner J.D."/>
            <person name="Rose D.J."/>
            <person name="Mayhew G.F."/>
            <person name="Evans P.S."/>
            <person name="Gregor J."/>
            <person name="Kirkpatrick H.A."/>
            <person name="Posfai G."/>
            <person name="Hackett J."/>
            <person name="Klink S."/>
            <person name="Boutin A."/>
            <person name="Shao Y."/>
            <person name="Miller L."/>
            <person name="Grotbeck E.J."/>
            <person name="Davis N.W."/>
            <person name="Lim A."/>
            <person name="Dimalanta E.T."/>
            <person name="Potamousis K."/>
            <person name="Apodaca J."/>
            <person name="Anantharaman T.S."/>
            <person name="Lin J."/>
            <person name="Yen G."/>
            <person name="Schwartz D.C."/>
            <person name="Welch R.A."/>
            <person name="Blattner F.R."/>
        </authorList>
    </citation>
    <scope>NUCLEOTIDE SEQUENCE [LARGE SCALE GENOMIC DNA]</scope>
    <source>
        <strain>O157:H7 / EDL933 / ATCC 700927 / EHEC</strain>
    </source>
</reference>
<reference key="2">
    <citation type="journal article" date="2001" name="DNA Res.">
        <title>Complete genome sequence of enterohemorrhagic Escherichia coli O157:H7 and genomic comparison with a laboratory strain K-12.</title>
        <authorList>
            <person name="Hayashi T."/>
            <person name="Makino K."/>
            <person name="Ohnishi M."/>
            <person name="Kurokawa K."/>
            <person name="Ishii K."/>
            <person name="Yokoyama K."/>
            <person name="Han C.-G."/>
            <person name="Ohtsubo E."/>
            <person name="Nakayama K."/>
            <person name="Murata T."/>
            <person name="Tanaka M."/>
            <person name="Tobe T."/>
            <person name="Iida T."/>
            <person name="Takami H."/>
            <person name="Honda T."/>
            <person name="Sasakawa C."/>
            <person name="Ogasawara N."/>
            <person name="Yasunaga T."/>
            <person name="Kuhara S."/>
            <person name="Shiba T."/>
            <person name="Hattori M."/>
            <person name="Shinagawa H."/>
        </authorList>
    </citation>
    <scope>NUCLEOTIDE SEQUENCE [LARGE SCALE GENOMIC DNA]</scope>
    <source>
        <strain>O157:H7 / Sakai / RIMD 0509952 / EHEC</strain>
    </source>
</reference>
<organism>
    <name type="scientific">Escherichia coli O157:H7</name>
    <dbReference type="NCBI Taxonomy" id="83334"/>
    <lineage>
        <taxon>Bacteria</taxon>
        <taxon>Pseudomonadati</taxon>
        <taxon>Pseudomonadota</taxon>
        <taxon>Gammaproteobacteria</taxon>
        <taxon>Enterobacterales</taxon>
        <taxon>Enterobacteriaceae</taxon>
        <taxon>Escherichia</taxon>
    </lineage>
</organism>
<gene>
    <name type="primary">cycA</name>
    <name type="ordered locus">Z5819</name>
    <name type="ordered locus">ECs5186</name>
</gene>
<proteinExistence type="inferred from homology"/>
<keyword id="KW-0029">Amino-acid transport</keyword>
<keyword id="KW-0997">Cell inner membrane</keyword>
<keyword id="KW-1003">Cell membrane</keyword>
<keyword id="KW-0472">Membrane</keyword>
<keyword id="KW-1185">Reference proteome</keyword>
<keyword id="KW-0769">Symport</keyword>
<keyword id="KW-0812">Transmembrane</keyword>
<keyword id="KW-1133">Transmembrane helix</keyword>
<keyword id="KW-0813">Transport</keyword>
<accession>P0AAE1</accession>
<accession>P39312</accession>
<dbReference type="EMBL" id="AE005174">
    <property type="protein sequence ID" value="AAG59406.1"/>
    <property type="molecule type" value="Genomic_DNA"/>
</dbReference>
<dbReference type="EMBL" id="BA000007">
    <property type="protein sequence ID" value="BAB38609.1"/>
    <property type="molecule type" value="Genomic_DNA"/>
</dbReference>
<dbReference type="PIR" id="B86118">
    <property type="entry name" value="B86118"/>
</dbReference>
<dbReference type="PIR" id="B91277">
    <property type="entry name" value="B91277"/>
</dbReference>
<dbReference type="RefSeq" id="NP_313213.1">
    <property type="nucleotide sequence ID" value="NC_002695.1"/>
</dbReference>
<dbReference type="RefSeq" id="WP_000228346.1">
    <property type="nucleotide sequence ID" value="NZ_VOAI01000023.1"/>
</dbReference>
<dbReference type="SMR" id="P0AAE1"/>
<dbReference type="STRING" id="155864.Z5819"/>
<dbReference type="GeneID" id="913962"/>
<dbReference type="GeneID" id="93777613"/>
<dbReference type="KEGG" id="ece:Z5819"/>
<dbReference type="KEGG" id="ecs:ECs_5186"/>
<dbReference type="PATRIC" id="fig|386585.9.peg.5421"/>
<dbReference type="eggNOG" id="COG1113">
    <property type="taxonomic scope" value="Bacteria"/>
</dbReference>
<dbReference type="HOGENOM" id="CLU_007946_9_3_6"/>
<dbReference type="OMA" id="PWRDVVP"/>
<dbReference type="Proteomes" id="UP000000558">
    <property type="component" value="Chromosome"/>
</dbReference>
<dbReference type="Proteomes" id="UP000002519">
    <property type="component" value="Chromosome"/>
</dbReference>
<dbReference type="GO" id="GO:0005886">
    <property type="term" value="C:plasma membrane"/>
    <property type="evidence" value="ECO:0007669"/>
    <property type="project" value="UniProtKB-SubCell"/>
</dbReference>
<dbReference type="GO" id="GO:0015293">
    <property type="term" value="F:symporter activity"/>
    <property type="evidence" value="ECO:0007669"/>
    <property type="project" value="UniProtKB-KW"/>
</dbReference>
<dbReference type="GO" id="GO:0006865">
    <property type="term" value="P:amino acid transport"/>
    <property type="evidence" value="ECO:0007669"/>
    <property type="project" value="UniProtKB-KW"/>
</dbReference>
<dbReference type="FunFam" id="1.20.1740.10:FF:000001">
    <property type="entry name" value="Amino acid permease"/>
    <property type="match status" value="1"/>
</dbReference>
<dbReference type="Gene3D" id="1.20.1740.10">
    <property type="entry name" value="Amino acid/polyamine transporter I"/>
    <property type="match status" value="1"/>
</dbReference>
<dbReference type="InterPro" id="IPR004841">
    <property type="entry name" value="AA-permease/SLC12A_dom"/>
</dbReference>
<dbReference type="InterPro" id="IPR004840">
    <property type="entry name" value="Amino_acid_permease_CS"/>
</dbReference>
<dbReference type="NCBIfam" id="NF008272">
    <property type="entry name" value="PRK11049.1"/>
    <property type="match status" value="1"/>
</dbReference>
<dbReference type="PANTHER" id="PTHR43495:SF2">
    <property type="entry name" value="D-SERINE_D-ALANINE_GLYCINE TRANSPORTER"/>
    <property type="match status" value="1"/>
</dbReference>
<dbReference type="PANTHER" id="PTHR43495">
    <property type="entry name" value="GABA PERMEASE"/>
    <property type="match status" value="1"/>
</dbReference>
<dbReference type="Pfam" id="PF00324">
    <property type="entry name" value="AA_permease"/>
    <property type="match status" value="1"/>
</dbReference>
<dbReference type="PIRSF" id="PIRSF006060">
    <property type="entry name" value="AA_transporter"/>
    <property type="match status" value="1"/>
</dbReference>
<dbReference type="PROSITE" id="PS00218">
    <property type="entry name" value="AMINO_ACID_PERMEASE_1"/>
    <property type="match status" value="1"/>
</dbReference>
<evidence type="ECO:0000250" key="1">
    <source>
        <dbReference type="UniProtKB" id="A0A0H2VDI7"/>
    </source>
</evidence>
<evidence type="ECO:0000250" key="2">
    <source>
        <dbReference type="UniProtKB" id="P0AAE0"/>
    </source>
</evidence>
<evidence type="ECO:0000255" key="3"/>
<evidence type="ECO:0000305" key="4"/>
<feature type="chain" id="PRO_0000054200" description="D-serine/D-alanine/glycine transporter">
    <location>
        <begin position="1"/>
        <end position="470"/>
    </location>
</feature>
<feature type="transmembrane region" description="Helical" evidence="3">
    <location>
        <begin position="30"/>
        <end position="50"/>
    </location>
</feature>
<feature type="transmembrane region" description="Helical" evidence="3">
    <location>
        <begin position="51"/>
        <end position="71"/>
    </location>
</feature>
<feature type="transmembrane region" description="Helical" evidence="3">
    <location>
        <begin position="102"/>
        <end position="122"/>
    </location>
</feature>
<feature type="transmembrane region" description="Helical" evidence="3">
    <location>
        <begin position="137"/>
        <end position="157"/>
    </location>
</feature>
<feature type="transmembrane region" description="Helical" evidence="3">
    <location>
        <begin position="162"/>
        <end position="182"/>
    </location>
</feature>
<feature type="transmembrane region" description="Helical" evidence="3">
    <location>
        <begin position="211"/>
        <end position="231"/>
    </location>
</feature>
<feature type="transmembrane region" description="Helical" evidence="3">
    <location>
        <begin position="256"/>
        <end position="276"/>
    </location>
</feature>
<feature type="transmembrane region" description="Helical" evidence="3">
    <location>
        <begin position="283"/>
        <end position="303"/>
    </location>
</feature>
<feature type="transmembrane region" description="Helical" evidence="3">
    <location>
        <begin position="350"/>
        <end position="370"/>
    </location>
</feature>
<feature type="transmembrane region" description="Helical" evidence="3">
    <location>
        <begin position="371"/>
        <end position="391"/>
    </location>
</feature>
<feature type="transmembrane region" description="Helical" evidence="3">
    <location>
        <begin position="413"/>
        <end position="433"/>
    </location>
</feature>
<feature type="transmembrane region" description="Helical" evidence="3">
    <location>
        <begin position="441"/>
        <end position="461"/>
    </location>
</feature>